<protein>
    <recommendedName>
        <fullName evidence="1">Lysine--tRNA ligase</fullName>
        <ecNumber evidence="1">6.1.1.6</ecNumber>
    </recommendedName>
    <alternativeName>
        <fullName evidence="1">Lysyl-tRNA synthetase</fullName>
        <shortName evidence="1">LysRS</shortName>
    </alternativeName>
</protein>
<gene>
    <name evidence="1" type="primary">lysS</name>
    <name type="ordered locus">llmg_0389</name>
</gene>
<comment type="catalytic activity">
    <reaction evidence="1">
        <text>tRNA(Lys) + L-lysine + ATP = L-lysyl-tRNA(Lys) + AMP + diphosphate</text>
        <dbReference type="Rhea" id="RHEA:20792"/>
        <dbReference type="Rhea" id="RHEA-COMP:9696"/>
        <dbReference type="Rhea" id="RHEA-COMP:9697"/>
        <dbReference type="ChEBI" id="CHEBI:30616"/>
        <dbReference type="ChEBI" id="CHEBI:32551"/>
        <dbReference type="ChEBI" id="CHEBI:33019"/>
        <dbReference type="ChEBI" id="CHEBI:78442"/>
        <dbReference type="ChEBI" id="CHEBI:78529"/>
        <dbReference type="ChEBI" id="CHEBI:456215"/>
        <dbReference type="EC" id="6.1.1.6"/>
    </reaction>
</comment>
<comment type="cofactor">
    <cofactor evidence="1">
        <name>Mg(2+)</name>
        <dbReference type="ChEBI" id="CHEBI:18420"/>
    </cofactor>
    <text evidence="1">Binds 3 Mg(2+) ions per subunit.</text>
</comment>
<comment type="subunit">
    <text evidence="1">Homodimer.</text>
</comment>
<comment type="subcellular location">
    <subcellularLocation>
        <location evidence="1">Cytoplasm</location>
    </subcellularLocation>
</comment>
<comment type="similarity">
    <text evidence="1">Belongs to the class-II aminoacyl-tRNA synthetase family.</text>
</comment>
<keyword id="KW-0030">Aminoacyl-tRNA synthetase</keyword>
<keyword id="KW-0067">ATP-binding</keyword>
<keyword id="KW-0963">Cytoplasm</keyword>
<keyword id="KW-0436">Ligase</keyword>
<keyword id="KW-0460">Magnesium</keyword>
<keyword id="KW-0479">Metal-binding</keyword>
<keyword id="KW-0547">Nucleotide-binding</keyword>
<keyword id="KW-0648">Protein biosynthesis</keyword>
<dbReference type="EC" id="6.1.1.6" evidence="1"/>
<dbReference type="EMBL" id="AM406671">
    <property type="protein sequence ID" value="CAL96994.1"/>
    <property type="molecule type" value="Genomic_DNA"/>
</dbReference>
<dbReference type="RefSeq" id="WP_011834442.1">
    <property type="nucleotide sequence ID" value="NC_009004.1"/>
</dbReference>
<dbReference type="SMR" id="A2RIA0"/>
<dbReference type="STRING" id="416870.llmg_0389"/>
<dbReference type="GeneID" id="61108692"/>
<dbReference type="KEGG" id="llm:llmg_0389"/>
<dbReference type="eggNOG" id="COG1190">
    <property type="taxonomic scope" value="Bacteria"/>
</dbReference>
<dbReference type="HOGENOM" id="CLU_008255_6_0_9"/>
<dbReference type="OrthoDB" id="9801152at2"/>
<dbReference type="PhylomeDB" id="A2RIA0"/>
<dbReference type="Proteomes" id="UP000000364">
    <property type="component" value="Chromosome"/>
</dbReference>
<dbReference type="GO" id="GO:0005829">
    <property type="term" value="C:cytosol"/>
    <property type="evidence" value="ECO:0007669"/>
    <property type="project" value="TreeGrafter"/>
</dbReference>
<dbReference type="GO" id="GO:0005524">
    <property type="term" value="F:ATP binding"/>
    <property type="evidence" value="ECO:0007669"/>
    <property type="project" value="UniProtKB-UniRule"/>
</dbReference>
<dbReference type="GO" id="GO:0140096">
    <property type="term" value="F:catalytic activity, acting on a protein"/>
    <property type="evidence" value="ECO:0007669"/>
    <property type="project" value="UniProtKB-ARBA"/>
</dbReference>
<dbReference type="GO" id="GO:0004824">
    <property type="term" value="F:lysine-tRNA ligase activity"/>
    <property type="evidence" value="ECO:0007669"/>
    <property type="project" value="UniProtKB-UniRule"/>
</dbReference>
<dbReference type="GO" id="GO:0000287">
    <property type="term" value="F:magnesium ion binding"/>
    <property type="evidence" value="ECO:0007669"/>
    <property type="project" value="UniProtKB-UniRule"/>
</dbReference>
<dbReference type="GO" id="GO:0016740">
    <property type="term" value="F:transferase activity"/>
    <property type="evidence" value="ECO:0007669"/>
    <property type="project" value="UniProtKB-ARBA"/>
</dbReference>
<dbReference type="GO" id="GO:0000049">
    <property type="term" value="F:tRNA binding"/>
    <property type="evidence" value="ECO:0007669"/>
    <property type="project" value="TreeGrafter"/>
</dbReference>
<dbReference type="GO" id="GO:0006430">
    <property type="term" value="P:lysyl-tRNA aminoacylation"/>
    <property type="evidence" value="ECO:0007669"/>
    <property type="project" value="UniProtKB-UniRule"/>
</dbReference>
<dbReference type="CDD" id="cd00775">
    <property type="entry name" value="LysRS_core"/>
    <property type="match status" value="1"/>
</dbReference>
<dbReference type="CDD" id="cd04322">
    <property type="entry name" value="LysRS_N"/>
    <property type="match status" value="1"/>
</dbReference>
<dbReference type="FunFam" id="2.40.50.140:FF:000024">
    <property type="entry name" value="Lysine--tRNA ligase"/>
    <property type="match status" value="1"/>
</dbReference>
<dbReference type="FunFam" id="3.30.930.10:FF:000001">
    <property type="entry name" value="Lysine--tRNA ligase"/>
    <property type="match status" value="1"/>
</dbReference>
<dbReference type="Gene3D" id="3.30.930.10">
    <property type="entry name" value="Bira Bifunctional Protein, Domain 2"/>
    <property type="match status" value="1"/>
</dbReference>
<dbReference type="Gene3D" id="2.40.50.140">
    <property type="entry name" value="Nucleic acid-binding proteins"/>
    <property type="match status" value="1"/>
</dbReference>
<dbReference type="HAMAP" id="MF_00252">
    <property type="entry name" value="Lys_tRNA_synth_class2"/>
    <property type="match status" value="1"/>
</dbReference>
<dbReference type="InterPro" id="IPR004364">
    <property type="entry name" value="Aa-tRNA-synt_II"/>
</dbReference>
<dbReference type="InterPro" id="IPR006195">
    <property type="entry name" value="aa-tRNA-synth_II"/>
</dbReference>
<dbReference type="InterPro" id="IPR045864">
    <property type="entry name" value="aa-tRNA-synth_II/BPL/LPL"/>
</dbReference>
<dbReference type="InterPro" id="IPR002313">
    <property type="entry name" value="Lys-tRNA-ligase_II"/>
</dbReference>
<dbReference type="InterPro" id="IPR044136">
    <property type="entry name" value="Lys-tRNA-ligase_II_N"/>
</dbReference>
<dbReference type="InterPro" id="IPR018149">
    <property type="entry name" value="Lys-tRNA-synth_II_C"/>
</dbReference>
<dbReference type="InterPro" id="IPR012340">
    <property type="entry name" value="NA-bd_OB-fold"/>
</dbReference>
<dbReference type="InterPro" id="IPR004365">
    <property type="entry name" value="NA-bd_OB_tRNA"/>
</dbReference>
<dbReference type="NCBIfam" id="TIGR00499">
    <property type="entry name" value="lysS_bact"/>
    <property type="match status" value="1"/>
</dbReference>
<dbReference type="NCBIfam" id="NF001756">
    <property type="entry name" value="PRK00484.1"/>
    <property type="match status" value="1"/>
</dbReference>
<dbReference type="PANTHER" id="PTHR42918:SF15">
    <property type="entry name" value="LYSINE--TRNA LIGASE, CHLOROPLASTIC_MITOCHONDRIAL"/>
    <property type="match status" value="1"/>
</dbReference>
<dbReference type="PANTHER" id="PTHR42918">
    <property type="entry name" value="LYSYL-TRNA SYNTHETASE"/>
    <property type="match status" value="1"/>
</dbReference>
<dbReference type="Pfam" id="PF00152">
    <property type="entry name" value="tRNA-synt_2"/>
    <property type="match status" value="1"/>
</dbReference>
<dbReference type="Pfam" id="PF01336">
    <property type="entry name" value="tRNA_anti-codon"/>
    <property type="match status" value="1"/>
</dbReference>
<dbReference type="PRINTS" id="PR00982">
    <property type="entry name" value="TRNASYNTHLYS"/>
</dbReference>
<dbReference type="SUPFAM" id="SSF55681">
    <property type="entry name" value="Class II aaRS and biotin synthetases"/>
    <property type="match status" value="1"/>
</dbReference>
<dbReference type="SUPFAM" id="SSF50249">
    <property type="entry name" value="Nucleic acid-binding proteins"/>
    <property type="match status" value="1"/>
</dbReference>
<dbReference type="PROSITE" id="PS50862">
    <property type="entry name" value="AA_TRNA_LIGASE_II"/>
    <property type="match status" value="1"/>
</dbReference>
<evidence type="ECO:0000255" key="1">
    <source>
        <dbReference type="HAMAP-Rule" id="MF_00252"/>
    </source>
</evidence>
<reference key="1">
    <citation type="journal article" date="2007" name="J. Bacteriol.">
        <title>The complete genome sequence of the lactic acid bacterial paradigm Lactococcus lactis subsp. cremoris MG1363.</title>
        <authorList>
            <person name="Wegmann U."/>
            <person name="O'Connell-Motherway M."/>
            <person name="Zomer A."/>
            <person name="Buist G."/>
            <person name="Shearman C."/>
            <person name="Canchaya C."/>
            <person name="Ventura M."/>
            <person name="Goesmann A."/>
            <person name="Gasson M.J."/>
            <person name="Kuipers O.P."/>
            <person name="van Sinderen D."/>
            <person name="Kok J."/>
        </authorList>
    </citation>
    <scope>NUCLEOTIDE SEQUENCE [LARGE SCALE GENOMIC DNA]</scope>
    <source>
        <strain>MG1363</strain>
    </source>
</reference>
<name>SYK_LACLM</name>
<sequence length="494" mass="56617">MAEIEELNDQMKVRREKMENLRDAGIDPFGHKFTRTHNSQELHEAYDEKTKEELHELALSGIVAGRLMTKRGKGKVGFAHLQDREGQIQLYVRKDEVGEENYEIFKKADLGDFLGVEGEIMKTDMGELSIKAKKLTFLSKALRPLPEKFHGLTDTETRYRKRYLDLISNKESFNRFVTRSKIISEIRRYMDGRGYLEVETPVLNNEAGGASARPFYTHHNSLDIDMALRIATELHLKRLIVGGMEKVYELGRVFRNEGMDMTHNPEFTTMESYEAYADFEDIMDLTEGIFQHVAKTVVGQDVLEYDGKEINVGGKFKRVHMVDAIKEVAGVDFWPEMTFEEATALAKEHDIHVEKHFTSVGHIINEFFEKYVEETLIQPTFVFGHPKEISPLAKMNEKDPRFTDRFELFINGKEYANAFSELNDPIDQLERFEAQAKAKELGDDEATGVDYDYVEALEHGMPPTGGLGIGIDRLVMLFTGTTSIRDVLLFPTMK</sequence>
<proteinExistence type="inferred from homology"/>
<organism>
    <name type="scientific">Lactococcus lactis subsp. cremoris (strain MG1363)</name>
    <dbReference type="NCBI Taxonomy" id="416870"/>
    <lineage>
        <taxon>Bacteria</taxon>
        <taxon>Bacillati</taxon>
        <taxon>Bacillota</taxon>
        <taxon>Bacilli</taxon>
        <taxon>Lactobacillales</taxon>
        <taxon>Streptococcaceae</taxon>
        <taxon>Lactococcus</taxon>
        <taxon>Lactococcus cremoris subsp. cremoris</taxon>
    </lineage>
</organism>
<feature type="chain" id="PRO_1000012880" description="Lysine--tRNA ligase">
    <location>
        <begin position="1"/>
        <end position="494"/>
    </location>
</feature>
<feature type="binding site" evidence="1">
    <location>
        <position position="407"/>
    </location>
    <ligand>
        <name>Mg(2+)</name>
        <dbReference type="ChEBI" id="CHEBI:18420"/>
        <label>1</label>
    </ligand>
</feature>
<feature type="binding site" evidence="1">
    <location>
        <position position="414"/>
    </location>
    <ligand>
        <name>Mg(2+)</name>
        <dbReference type="ChEBI" id="CHEBI:18420"/>
        <label>1</label>
    </ligand>
</feature>
<feature type="binding site" evidence="1">
    <location>
        <position position="414"/>
    </location>
    <ligand>
        <name>Mg(2+)</name>
        <dbReference type="ChEBI" id="CHEBI:18420"/>
        <label>2</label>
    </ligand>
</feature>
<accession>A2RIA0</accession>